<name>INT12_HUMAN</name>
<comment type="function">
    <text evidence="3 4 5">Component of the integrator complex, a multiprotein complex that terminates RNA polymerase II (Pol II) transcription in the promoter-proximal region of genes (PubMed:38570683). The integrator complex provides a quality checkpoint during transcription elongation by driving premature transcription termination of transcripts that are unfavorably configured for transcriptional elongation: the complex terminates transcription by (1) catalyzing dephosphorylation of the C-terminal domain (CTD) of Pol II subunit POLR2A/RPB1 and SUPT5H/SPT5, (2) degrading the exiting nascent RNA transcript via endonuclease activity and (3) promoting the release of Pol II from bound DNA (PubMed:38570683). The integrator complex is also involved in terminating the synthesis of non-coding Pol II transcripts, such as enhancer RNAs (eRNAs), small nuclear RNAs (snRNAs), telomerase RNAs and long non-coding RNAs (lncRNAs) (PubMed:16239144). Mediates recruitment of cytoplasmic dynein to the nuclear envelope, probably as component of the integrator complex (PubMed:23904267).</text>
</comment>
<comment type="subunit">
    <text evidence="3 5 6">Component of the Integrator complex, composed of core subunits INTS1, INTS2, INTS3, INTS4, INTS5, INTS6, INTS7, INTS8, INTS9/RC74, INTS10, INTS11/CPSF3L, INTS12, INTS13, INTS14 and INTS15 (PubMed:16239144, PubMed:38570683, PubMed:39032490). The core complex associates with protein phosphatase 2A subunits PPP2CA and PPP2R1A, to form the Integrator-PP2A (INTAC) complex (PubMed:38570683).</text>
</comment>
<comment type="interaction">
    <interactant intactId="EBI-1049156">
        <id>Q96CB8</id>
    </interactant>
    <interactant intactId="EBI-8468186">
        <id>Q8IZU1</id>
        <label>FAM9A</label>
    </interactant>
    <organismsDiffer>false</organismsDiffer>
    <experiments>3</experiments>
</comment>
<comment type="interaction">
    <interactant intactId="EBI-1049156">
        <id>Q96CB8</id>
    </interactant>
    <interactant intactId="EBI-372530">
        <id>Q9UHL9</id>
        <label>GTF2IRD1</label>
    </interactant>
    <organismsDiffer>false</organismsDiffer>
    <experiments>3</experiments>
</comment>
<comment type="interaction">
    <interactant intactId="EBI-1049156">
        <id>Q96CB8</id>
    </interactant>
    <interactant intactId="EBI-10234807">
        <id>Q14CZ0</id>
        <label>HAPSTR1</label>
    </interactant>
    <organismsDiffer>false</organismsDiffer>
    <experiments>5</experiments>
</comment>
<comment type="interaction">
    <interactant intactId="EBI-1049156">
        <id>Q96CB8</id>
    </interactant>
    <interactant intactId="EBI-724549">
        <id>Q8N201</id>
        <label>INTS1</label>
    </interactant>
    <organismsDiffer>false</organismsDiffer>
    <experiments>2</experiments>
</comment>
<comment type="subcellular location">
    <subcellularLocation>
        <location evidence="4 6">Nucleus</location>
    </subcellularLocation>
</comment>
<comment type="PTM">
    <text evidence="7">Dephosphorylated at Ser-128 by the PNUTS-PP1 complex, promoting RNA polymerase II transcription pause-release.</text>
</comment>
<comment type="similarity">
    <text evidence="10">Belongs to the Integrator subunit 12 family.</text>
</comment>
<comment type="sequence caution" evidence="10">
    <conflict type="frameshift">
        <sequence resource="EMBL-CDS" id="AAF99604"/>
    </conflict>
</comment>
<gene>
    <name evidence="8 11" type="primary">INTS12</name>
    <name type="synonym">PHF22</name>
    <name evidence="9" type="ORF">SBBI22</name>
</gene>
<feature type="chain" id="PRO_0000059312" description="Integrator complex subunit 12">
    <location>
        <begin position="1"/>
        <end position="462"/>
    </location>
</feature>
<feature type="zinc finger region" description="PHD-type" evidence="1">
    <location>
        <begin position="159"/>
        <end position="215"/>
    </location>
</feature>
<feature type="region of interest" description="Disordered" evidence="2">
    <location>
        <begin position="42"/>
        <end position="132"/>
    </location>
</feature>
<feature type="region of interest" description="Disordered" evidence="2">
    <location>
        <begin position="301"/>
        <end position="462"/>
    </location>
</feature>
<feature type="compositionally biased region" description="Polar residues" evidence="2">
    <location>
        <begin position="59"/>
        <end position="86"/>
    </location>
</feature>
<feature type="compositionally biased region" description="Basic and acidic residues" evidence="2">
    <location>
        <begin position="88"/>
        <end position="124"/>
    </location>
</feature>
<feature type="compositionally biased region" description="Polar residues" evidence="2">
    <location>
        <begin position="301"/>
        <end position="328"/>
    </location>
</feature>
<feature type="compositionally biased region" description="Low complexity" evidence="2">
    <location>
        <begin position="347"/>
        <end position="358"/>
    </location>
</feature>
<feature type="compositionally biased region" description="Low complexity" evidence="2">
    <location>
        <begin position="382"/>
        <end position="437"/>
    </location>
</feature>
<feature type="compositionally biased region" description="Basic residues" evidence="2">
    <location>
        <begin position="449"/>
        <end position="462"/>
    </location>
</feature>
<feature type="modified residue" description="Phosphoserine" evidence="7 12 13 14">
    <location>
        <position position="128"/>
    </location>
</feature>
<feature type="cross-link" description="Glycyl lysine isopeptide (Lys-Gly) (interchain with G-Cter in SUMO2)" evidence="15 16">
    <location>
        <position position="68"/>
    </location>
</feature>
<feature type="cross-link" description="Glycyl lysine isopeptide (Lys-Gly) (interchain with G-Cter in SUMO2)" evidence="16">
    <location>
        <position position="254"/>
    </location>
</feature>
<feature type="sequence variant" id="VAR_049629" description="In dbSNP:rs34567094.">
    <original>T</original>
    <variation>A</variation>
    <location>
        <position position="323"/>
    </location>
</feature>
<keyword id="KW-1017">Isopeptide bond</keyword>
<keyword id="KW-0479">Metal-binding</keyword>
<keyword id="KW-0539">Nucleus</keyword>
<keyword id="KW-0597">Phosphoprotein</keyword>
<keyword id="KW-1267">Proteomics identification</keyword>
<keyword id="KW-1185">Reference proteome</keyword>
<keyword id="KW-0832">Ubl conjugation</keyword>
<keyword id="KW-0862">Zinc</keyword>
<keyword id="KW-0863">Zinc-finger</keyword>
<protein>
    <recommendedName>
        <fullName evidence="10">Integrator complex subunit 12</fullName>
        <shortName>Int12</shortName>
    </recommendedName>
    <alternativeName>
        <fullName>PHD finger protein 22</fullName>
    </alternativeName>
</protein>
<proteinExistence type="evidence at protein level"/>
<sequence>MAATVNLELDPIFLKALGFLHSKSKDSAEKLKALLDESLARGIDSSYRPSQKDVEPPKISSTKNISIKQEPKISSSLPSGNNNGKVLTTEKVKKEAEKRPADKMKSDITEGVDIPKKPRLEKPETQSSPITVQSSKDLPMADLSSFEETSADDFAMEMGLACVVCRQMMVASGNQLVECQECHNLYHRDCHKPQVTDKEANDPRLVWYCARCTRQMKRMAQKTQKPPQKPAPAVVSVTPAVKDPLVKKPETKLKQETTFLAFKRTEVKTSTVISGNSSSASVSSSVTSGLTGWAAFAAKTSSAGPSTAKLSSTTQNNTGKPATSSANQKPVGLTGLATSSKGGIGSKIGSNNSTTPTVPLKPPPPLTLGKTGLSRSVSCDNVSKVGLPSPSSLVPGSSSQLSGNGNSGTSGPSGSTTSKTTSESSSSPSASLKGPTSQESQLNAMKRLQMVKKKAAQKKLKK</sequence>
<reference key="1">
    <citation type="submission" date="2000-03" db="EMBL/GenBank/DDBJ databases">
        <title>Hypothetical nuclear factor SBBI22 mRNA.</title>
        <authorList>
            <person name="Wan T."/>
            <person name="Li N."/>
            <person name="Zhang W."/>
            <person name="Cao X."/>
        </authorList>
    </citation>
    <scope>NUCLEOTIDE SEQUENCE [MRNA]</scope>
</reference>
<reference key="2">
    <citation type="journal article" date="2004" name="Nat. Genet.">
        <title>Complete sequencing and characterization of 21,243 full-length human cDNAs.</title>
        <authorList>
            <person name="Ota T."/>
            <person name="Suzuki Y."/>
            <person name="Nishikawa T."/>
            <person name="Otsuki T."/>
            <person name="Sugiyama T."/>
            <person name="Irie R."/>
            <person name="Wakamatsu A."/>
            <person name="Hayashi K."/>
            <person name="Sato H."/>
            <person name="Nagai K."/>
            <person name="Kimura K."/>
            <person name="Makita H."/>
            <person name="Sekine M."/>
            <person name="Obayashi M."/>
            <person name="Nishi T."/>
            <person name="Shibahara T."/>
            <person name="Tanaka T."/>
            <person name="Ishii S."/>
            <person name="Yamamoto J."/>
            <person name="Saito K."/>
            <person name="Kawai Y."/>
            <person name="Isono Y."/>
            <person name="Nakamura Y."/>
            <person name="Nagahari K."/>
            <person name="Murakami K."/>
            <person name="Yasuda T."/>
            <person name="Iwayanagi T."/>
            <person name="Wagatsuma M."/>
            <person name="Shiratori A."/>
            <person name="Sudo H."/>
            <person name="Hosoiri T."/>
            <person name="Kaku Y."/>
            <person name="Kodaira H."/>
            <person name="Kondo H."/>
            <person name="Sugawara M."/>
            <person name="Takahashi M."/>
            <person name="Kanda K."/>
            <person name="Yokoi T."/>
            <person name="Furuya T."/>
            <person name="Kikkawa E."/>
            <person name="Omura Y."/>
            <person name="Abe K."/>
            <person name="Kamihara K."/>
            <person name="Katsuta N."/>
            <person name="Sato K."/>
            <person name="Tanikawa M."/>
            <person name="Yamazaki M."/>
            <person name="Ninomiya K."/>
            <person name="Ishibashi T."/>
            <person name="Yamashita H."/>
            <person name="Murakawa K."/>
            <person name="Fujimori K."/>
            <person name="Tanai H."/>
            <person name="Kimata M."/>
            <person name="Watanabe M."/>
            <person name="Hiraoka S."/>
            <person name="Chiba Y."/>
            <person name="Ishida S."/>
            <person name="Ono Y."/>
            <person name="Takiguchi S."/>
            <person name="Watanabe S."/>
            <person name="Yosida M."/>
            <person name="Hotuta T."/>
            <person name="Kusano J."/>
            <person name="Kanehori K."/>
            <person name="Takahashi-Fujii A."/>
            <person name="Hara H."/>
            <person name="Tanase T.-O."/>
            <person name="Nomura Y."/>
            <person name="Togiya S."/>
            <person name="Komai F."/>
            <person name="Hara R."/>
            <person name="Takeuchi K."/>
            <person name="Arita M."/>
            <person name="Imose N."/>
            <person name="Musashino K."/>
            <person name="Yuuki H."/>
            <person name="Oshima A."/>
            <person name="Sasaki N."/>
            <person name="Aotsuka S."/>
            <person name="Yoshikawa Y."/>
            <person name="Matsunawa H."/>
            <person name="Ichihara T."/>
            <person name="Shiohata N."/>
            <person name="Sano S."/>
            <person name="Moriya S."/>
            <person name="Momiyama H."/>
            <person name="Satoh N."/>
            <person name="Takami S."/>
            <person name="Terashima Y."/>
            <person name="Suzuki O."/>
            <person name="Nakagawa S."/>
            <person name="Senoh A."/>
            <person name="Mizoguchi H."/>
            <person name="Goto Y."/>
            <person name="Shimizu F."/>
            <person name="Wakebe H."/>
            <person name="Hishigaki H."/>
            <person name="Watanabe T."/>
            <person name="Sugiyama A."/>
            <person name="Takemoto M."/>
            <person name="Kawakami B."/>
            <person name="Yamazaki M."/>
            <person name="Watanabe K."/>
            <person name="Kumagai A."/>
            <person name="Itakura S."/>
            <person name="Fukuzumi Y."/>
            <person name="Fujimori Y."/>
            <person name="Komiyama M."/>
            <person name="Tashiro H."/>
            <person name="Tanigami A."/>
            <person name="Fujiwara T."/>
            <person name="Ono T."/>
            <person name="Yamada K."/>
            <person name="Fujii Y."/>
            <person name="Ozaki K."/>
            <person name="Hirao M."/>
            <person name="Ohmori Y."/>
            <person name="Kawabata A."/>
            <person name="Hikiji T."/>
            <person name="Kobatake N."/>
            <person name="Inagaki H."/>
            <person name="Ikema Y."/>
            <person name="Okamoto S."/>
            <person name="Okitani R."/>
            <person name="Kawakami T."/>
            <person name="Noguchi S."/>
            <person name="Itoh T."/>
            <person name="Shigeta K."/>
            <person name="Senba T."/>
            <person name="Matsumura K."/>
            <person name="Nakajima Y."/>
            <person name="Mizuno T."/>
            <person name="Morinaga M."/>
            <person name="Sasaki M."/>
            <person name="Togashi T."/>
            <person name="Oyama M."/>
            <person name="Hata H."/>
            <person name="Watanabe M."/>
            <person name="Komatsu T."/>
            <person name="Mizushima-Sugano J."/>
            <person name="Satoh T."/>
            <person name="Shirai Y."/>
            <person name="Takahashi Y."/>
            <person name="Nakagawa K."/>
            <person name="Okumura K."/>
            <person name="Nagase T."/>
            <person name="Nomura N."/>
            <person name="Kikuchi H."/>
            <person name="Masuho Y."/>
            <person name="Yamashita R."/>
            <person name="Nakai K."/>
            <person name="Yada T."/>
            <person name="Nakamura Y."/>
            <person name="Ohara O."/>
            <person name="Isogai T."/>
            <person name="Sugano S."/>
        </authorList>
    </citation>
    <scope>NUCLEOTIDE SEQUENCE [LARGE SCALE MRNA]</scope>
    <source>
        <tissue>Brain</tissue>
    </source>
</reference>
<reference key="3">
    <citation type="submission" date="2005-07" db="EMBL/GenBank/DDBJ databases">
        <authorList>
            <person name="Mural R.J."/>
            <person name="Istrail S."/>
            <person name="Sutton G.G."/>
            <person name="Florea L."/>
            <person name="Halpern A.L."/>
            <person name="Mobarry C.M."/>
            <person name="Lippert R."/>
            <person name="Walenz B."/>
            <person name="Shatkay H."/>
            <person name="Dew I."/>
            <person name="Miller J.R."/>
            <person name="Flanigan M.J."/>
            <person name="Edwards N.J."/>
            <person name="Bolanos R."/>
            <person name="Fasulo D."/>
            <person name="Halldorsson B.V."/>
            <person name="Hannenhalli S."/>
            <person name="Turner R."/>
            <person name="Yooseph S."/>
            <person name="Lu F."/>
            <person name="Nusskern D.R."/>
            <person name="Shue B.C."/>
            <person name="Zheng X.H."/>
            <person name="Zhong F."/>
            <person name="Delcher A.L."/>
            <person name="Huson D.H."/>
            <person name="Kravitz S.A."/>
            <person name="Mouchard L."/>
            <person name="Reinert K."/>
            <person name="Remington K.A."/>
            <person name="Clark A.G."/>
            <person name="Waterman M.S."/>
            <person name="Eichler E.E."/>
            <person name="Adams M.D."/>
            <person name="Hunkapiller M.W."/>
            <person name="Myers E.W."/>
            <person name="Venter J.C."/>
        </authorList>
    </citation>
    <scope>NUCLEOTIDE SEQUENCE [LARGE SCALE GENOMIC DNA]</scope>
</reference>
<reference key="4">
    <citation type="journal article" date="2004" name="Genome Res.">
        <title>The status, quality, and expansion of the NIH full-length cDNA project: the Mammalian Gene Collection (MGC).</title>
        <authorList>
            <consortium name="The MGC Project Team"/>
        </authorList>
    </citation>
    <scope>NUCLEOTIDE SEQUENCE [LARGE SCALE MRNA]</scope>
    <source>
        <tissue>Colon</tissue>
    </source>
</reference>
<reference key="5">
    <citation type="journal article" date="2005" name="Cell">
        <title>Integrator, a multiprotein mediator of small nuclear RNA processing, associates with the C-terminal repeat of RNA polymerase II.</title>
        <authorList>
            <person name="Baillat D."/>
            <person name="Hakimi M.-A."/>
            <person name="Naeaer A.M."/>
            <person name="Shilatifard A."/>
            <person name="Cooch N."/>
            <person name="Shiekhattar R."/>
        </authorList>
    </citation>
    <scope>FUNCTION</scope>
    <scope>IDENTIFICATION BY MASS SPECTROMETRY</scope>
    <scope>IDENTIFICATION IN THE INTEGRATOR COMPLEX</scope>
</reference>
<reference key="6">
    <citation type="journal article" date="2006" name="Nat. Biotechnol.">
        <title>A probability-based approach for high-throughput protein phosphorylation analysis and site localization.</title>
        <authorList>
            <person name="Beausoleil S.A."/>
            <person name="Villen J."/>
            <person name="Gerber S.A."/>
            <person name="Rush J."/>
            <person name="Gygi S.P."/>
        </authorList>
    </citation>
    <scope>IDENTIFICATION BY MASS SPECTROMETRY [LARGE SCALE ANALYSIS]</scope>
    <source>
        <tissue>Cervix carcinoma</tissue>
    </source>
</reference>
<reference key="7">
    <citation type="journal article" date="2008" name="Mol. Cell">
        <title>Kinase-selective enrichment enables quantitative phosphoproteomics of the kinome across the cell cycle.</title>
        <authorList>
            <person name="Daub H."/>
            <person name="Olsen J.V."/>
            <person name="Bairlein M."/>
            <person name="Gnad F."/>
            <person name="Oppermann F.S."/>
            <person name="Korner R."/>
            <person name="Greff Z."/>
            <person name="Keri G."/>
            <person name="Stemmann O."/>
            <person name="Mann M."/>
        </authorList>
    </citation>
    <scope>IDENTIFICATION BY MASS SPECTROMETRY [LARGE SCALE ANALYSIS]</scope>
    <source>
        <tissue>Cervix carcinoma</tissue>
    </source>
</reference>
<reference key="8">
    <citation type="journal article" date="2008" name="Proc. Natl. Acad. Sci. U.S.A.">
        <title>A quantitative atlas of mitotic phosphorylation.</title>
        <authorList>
            <person name="Dephoure N."/>
            <person name="Zhou C."/>
            <person name="Villen J."/>
            <person name="Beausoleil S.A."/>
            <person name="Bakalarski C.E."/>
            <person name="Elledge S.J."/>
            <person name="Gygi S.P."/>
        </authorList>
    </citation>
    <scope>PHOSPHORYLATION [LARGE SCALE ANALYSIS] AT SER-128</scope>
    <scope>IDENTIFICATION BY MASS SPECTROMETRY [LARGE SCALE ANALYSIS]</scope>
    <source>
        <tissue>Cervix carcinoma</tissue>
    </source>
</reference>
<reference key="9">
    <citation type="journal article" date="2009" name="Anal. Chem.">
        <title>Lys-N and trypsin cover complementary parts of the phosphoproteome in a refined SCX-based approach.</title>
        <authorList>
            <person name="Gauci S."/>
            <person name="Helbig A.O."/>
            <person name="Slijper M."/>
            <person name="Krijgsveld J."/>
            <person name="Heck A.J."/>
            <person name="Mohammed S."/>
        </authorList>
    </citation>
    <scope>IDENTIFICATION BY MASS SPECTROMETRY [LARGE SCALE ANALYSIS]</scope>
</reference>
<reference key="10">
    <citation type="journal article" date="2010" name="Sci. Signal.">
        <title>Quantitative phosphoproteomics reveals widespread full phosphorylation site occupancy during mitosis.</title>
        <authorList>
            <person name="Olsen J.V."/>
            <person name="Vermeulen M."/>
            <person name="Santamaria A."/>
            <person name="Kumar C."/>
            <person name="Miller M.L."/>
            <person name="Jensen L.J."/>
            <person name="Gnad F."/>
            <person name="Cox J."/>
            <person name="Jensen T.S."/>
            <person name="Nigg E.A."/>
            <person name="Brunak S."/>
            <person name="Mann M."/>
        </authorList>
    </citation>
    <scope>IDENTIFICATION BY MASS SPECTROMETRY [LARGE SCALE ANALYSIS]</scope>
    <source>
        <tissue>Cervix carcinoma</tissue>
    </source>
</reference>
<reference key="11">
    <citation type="journal article" date="2013" name="J. Proteome Res.">
        <title>Toward a comprehensive characterization of a human cancer cell phosphoproteome.</title>
        <authorList>
            <person name="Zhou H."/>
            <person name="Di Palma S."/>
            <person name="Preisinger C."/>
            <person name="Peng M."/>
            <person name="Polat A.N."/>
            <person name="Heck A.J."/>
            <person name="Mohammed S."/>
        </authorList>
    </citation>
    <scope>PHOSPHORYLATION [LARGE SCALE ANALYSIS] AT SER-128</scope>
    <scope>IDENTIFICATION BY MASS SPECTROMETRY [LARGE SCALE ANALYSIS]</scope>
    <source>
        <tissue>Cervix carcinoma</tissue>
        <tissue>Erythroleukemia</tissue>
    </source>
</reference>
<reference key="12">
    <citation type="journal article" date="2013" name="Mol. Biol. Cell">
        <title>Nuclear-localized Asunder regulates cytoplasmic dynein localization via its role in the integrator complex.</title>
        <authorList>
            <person name="Jodoin J.N."/>
            <person name="Sitaram P."/>
            <person name="Albrecht T.R."/>
            <person name="May S.B."/>
            <person name="Shboul M."/>
            <person name="Lee E."/>
            <person name="Reversade B."/>
            <person name="Wagner E.J."/>
            <person name="Lee L.A."/>
        </authorList>
    </citation>
    <scope>FUNCTION</scope>
    <scope>SUBCELLULAR LOCATION</scope>
</reference>
<reference key="13">
    <citation type="journal article" date="2014" name="J. Proteomics">
        <title>An enzyme assisted RP-RPLC approach for in-depth analysis of human liver phosphoproteome.</title>
        <authorList>
            <person name="Bian Y."/>
            <person name="Song C."/>
            <person name="Cheng K."/>
            <person name="Dong M."/>
            <person name="Wang F."/>
            <person name="Huang J."/>
            <person name="Sun D."/>
            <person name="Wang L."/>
            <person name="Ye M."/>
            <person name="Zou H."/>
        </authorList>
    </citation>
    <scope>PHOSPHORYLATION [LARGE SCALE ANALYSIS] AT SER-128</scope>
    <scope>IDENTIFICATION BY MASS SPECTROMETRY [LARGE SCALE ANALYSIS]</scope>
    <source>
        <tissue>Liver</tissue>
    </source>
</reference>
<reference key="14">
    <citation type="journal article" date="2014" name="Nat. Struct. Mol. Biol.">
        <title>Uncovering global SUMOylation signaling networks in a site-specific manner.</title>
        <authorList>
            <person name="Hendriks I.A."/>
            <person name="D'Souza R.C."/>
            <person name="Yang B."/>
            <person name="Verlaan-de Vries M."/>
            <person name="Mann M."/>
            <person name="Vertegaal A.C."/>
        </authorList>
    </citation>
    <scope>SUMOYLATION [LARGE SCALE ANALYSIS] AT LYS-68</scope>
    <scope>IDENTIFICATION BY MASS SPECTROMETRY [LARGE SCALE ANALYSIS]</scope>
</reference>
<reference key="15">
    <citation type="journal article" date="2017" name="Nat. Struct. Mol. Biol.">
        <title>Site-specific mapping of the human SUMO proteome reveals co-modification with phosphorylation.</title>
        <authorList>
            <person name="Hendriks I.A."/>
            <person name="Lyon D."/>
            <person name="Young C."/>
            <person name="Jensen L.J."/>
            <person name="Vertegaal A.C."/>
            <person name="Nielsen M.L."/>
        </authorList>
    </citation>
    <scope>SUMOYLATION [LARGE SCALE ANALYSIS] AT LYS-68 AND LYS-254</scope>
    <scope>IDENTIFICATION BY MASS SPECTROMETRY [LARGE SCALE ANALYSIS]</scope>
</reference>
<reference key="16">
    <citation type="journal article" date="2024" name="Nature">
        <title>Structural basis of Integrator-dependent RNA polymerase II termination.</title>
        <authorList>
            <person name="Fianu I."/>
            <person name="Ochmann M."/>
            <person name="Walshe J.L."/>
            <person name="Dybkov O."/>
            <person name="Cruz J.N."/>
            <person name="Urlaub H."/>
            <person name="Cramer P."/>
        </authorList>
    </citation>
    <scope>FUNCTION</scope>
    <scope>IDENTIFICATION IN THE INTAC COMPLEX</scope>
</reference>
<reference key="17">
    <citation type="journal article" date="2024" name="Mol. Cell">
        <title>Cytoplasmic binding partners of the Integrator endonuclease INTS11 and its paralog CPSF73 are required for their nuclear function.</title>
        <authorList>
            <person name="Lin M.H."/>
            <person name="Jensen M.K."/>
            <person name="Elrod N.D."/>
            <person name="Chu H.F."/>
            <person name="Haseley M."/>
            <person name="Beam A.C."/>
            <person name="Huang K.L."/>
            <person name="Chiang W."/>
            <person name="Russell W.K."/>
            <person name="Williams K."/>
            <person name="Proschel C."/>
            <person name="Wagner E.J."/>
            <person name="Tong L."/>
        </authorList>
    </citation>
    <scope>IDENTIFICATION IN THE INTEGRATOR COMPLEX</scope>
    <scope>SUBCELLULAR LOCATION</scope>
</reference>
<reference key="18">
    <citation type="journal article" date="2024" name="Mol. Cell">
        <title>The phosphatase PP1 sustains global transcription by promoting RNA polymerase II pause release.</title>
        <authorList>
            <person name="Wang Z."/>
            <person name="Song A."/>
            <person name="Tao B."/>
            <person name="Miao M."/>
            <person name="Luo Y.Q."/>
            <person name="Wang J."/>
            <person name="Yin Z."/>
            <person name="Xiao R."/>
            <person name="Zhou X."/>
            <person name="Shang X.Y."/>
            <person name="Hu S."/>
            <person name="Liang K."/>
            <person name="Danko C.G."/>
            <person name="Chen F.X."/>
        </authorList>
    </citation>
    <scope>PHOSPHORYLATION AT SER-128</scope>
    <scope>DEPHOSPHORYLATION AT SER-128</scope>
</reference>
<organism>
    <name type="scientific">Homo sapiens</name>
    <name type="common">Human</name>
    <dbReference type="NCBI Taxonomy" id="9606"/>
    <lineage>
        <taxon>Eukaryota</taxon>
        <taxon>Metazoa</taxon>
        <taxon>Chordata</taxon>
        <taxon>Craniata</taxon>
        <taxon>Vertebrata</taxon>
        <taxon>Euteleostomi</taxon>
        <taxon>Mammalia</taxon>
        <taxon>Eutheria</taxon>
        <taxon>Euarchontoglires</taxon>
        <taxon>Primates</taxon>
        <taxon>Haplorrhini</taxon>
        <taxon>Catarrhini</taxon>
        <taxon>Hominidae</taxon>
        <taxon>Homo</taxon>
    </lineage>
</organism>
<accession>Q96CB8</accession>
<accession>B2RC48</accession>
<accession>Q3B6Z3</accession>
<accession>Q9HD71</accession>
<evidence type="ECO:0000255" key="1">
    <source>
        <dbReference type="PROSITE-ProRule" id="PRU00146"/>
    </source>
</evidence>
<evidence type="ECO:0000256" key="2">
    <source>
        <dbReference type="SAM" id="MobiDB-lite"/>
    </source>
</evidence>
<evidence type="ECO:0000269" key="3">
    <source>
    </source>
</evidence>
<evidence type="ECO:0000269" key="4">
    <source>
    </source>
</evidence>
<evidence type="ECO:0000269" key="5">
    <source>
    </source>
</evidence>
<evidence type="ECO:0000269" key="6">
    <source>
    </source>
</evidence>
<evidence type="ECO:0000269" key="7">
    <source>
    </source>
</evidence>
<evidence type="ECO:0000303" key="8">
    <source>
    </source>
</evidence>
<evidence type="ECO:0000303" key="9">
    <source ref="1"/>
</evidence>
<evidence type="ECO:0000305" key="10"/>
<evidence type="ECO:0000312" key="11">
    <source>
        <dbReference type="HGNC" id="HGNC:25067"/>
    </source>
</evidence>
<evidence type="ECO:0007744" key="12">
    <source>
    </source>
</evidence>
<evidence type="ECO:0007744" key="13">
    <source>
    </source>
</evidence>
<evidence type="ECO:0007744" key="14">
    <source>
    </source>
</evidence>
<evidence type="ECO:0007744" key="15">
    <source>
    </source>
</evidence>
<evidence type="ECO:0007744" key="16">
    <source>
    </source>
</evidence>
<dbReference type="EMBL" id="AF242524">
    <property type="protein sequence ID" value="AAF99604.1"/>
    <property type="status" value="ALT_FRAME"/>
    <property type="molecule type" value="mRNA"/>
</dbReference>
<dbReference type="EMBL" id="AK314939">
    <property type="protein sequence ID" value="BAG37445.1"/>
    <property type="molecule type" value="mRNA"/>
</dbReference>
<dbReference type="EMBL" id="CH471057">
    <property type="protein sequence ID" value="EAX06189.1"/>
    <property type="molecule type" value="Genomic_DNA"/>
</dbReference>
<dbReference type="EMBL" id="BC014442">
    <property type="protein sequence ID" value="AAH14442.1"/>
    <property type="molecule type" value="mRNA"/>
</dbReference>
<dbReference type="EMBL" id="BK005729">
    <property type="protein sequence ID" value="DAA05729.1"/>
    <property type="molecule type" value="mRNA"/>
</dbReference>
<dbReference type="CCDS" id="CCDS3671.1"/>
<dbReference type="RefSeq" id="NP_001135943.1">
    <property type="nucleotide sequence ID" value="NM_001142471.2"/>
</dbReference>
<dbReference type="RefSeq" id="NP_065128.2">
    <property type="nucleotide sequence ID" value="NM_020395.3"/>
</dbReference>
<dbReference type="RefSeq" id="XP_005263205.1">
    <property type="nucleotide sequence ID" value="XM_005263148.6"/>
</dbReference>
<dbReference type="RefSeq" id="XP_011530445.1">
    <property type="nucleotide sequence ID" value="XM_011532143.3"/>
</dbReference>
<dbReference type="RefSeq" id="XP_011530447.1">
    <property type="nucleotide sequence ID" value="XM_011532145.3"/>
</dbReference>
<dbReference type="RefSeq" id="XP_047271947.1">
    <property type="nucleotide sequence ID" value="XM_047415991.1"/>
</dbReference>
<dbReference type="RefSeq" id="XP_054206529.1">
    <property type="nucleotide sequence ID" value="XM_054350554.1"/>
</dbReference>
<dbReference type="RefSeq" id="XP_054206530.1">
    <property type="nucleotide sequence ID" value="XM_054350555.1"/>
</dbReference>
<dbReference type="RefSeq" id="XP_054206531.1">
    <property type="nucleotide sequence ID" value="XM_054350556.1"/>
</dbReference>
<dbReference type="RefSeq" id="XP_054206532.1">
    <property type="nucleotide sequence ID" value="XM_054350557.1"/>
</dbReference>
<dbReference type="SMR" id="Q96CB8"/>
<dbReference type="BioGRID" id="121381">
    <property type="interactions" value="131"/>
</dbReference>
<dbReference type="ComplexPortal" id="CPX-6441">
    <property type="entry name" value="Integrator complex"/>
</dbReference>
<dbReference type="CORUM" id="Q96CB8"/>
<dbReference type="DIP" id="DIP-48479N"/>
<dbReference type="FunCoup" id="Q96CB8">
    <property type="interactions" value="3301"/>
</dbReference>
<dbReference type="IntAct" id="Q96CB8">
    <property type="interactions" value="112"/>
</dbReference>
<dbReference type="MINT" id="Q96CB8"/>
<dbReference type="STRING" id="9606.ENSP00000415433"/>
<dbReference type="GlyCosmos" id="Q96CB8">
    <property type="glycosylation" value="7 sites, 2 glycans"/>
</dbReference>
<dbReference type="GlyGen" id="Q96CB8">
    <property type="glycosylation" value="12 sites, 2 N-linked glycans (2 sites), 2 O-linked glycans (9 sites)"/>
</dbReference>
<dbReference type="iPTMnet" id="Q96CB8"/>
<dbReference type="PhosphoSitePlus" id="Q96CB8"/>
<dbReference type="BioMuta" id="INTS12"/>
<dbReference type="DMDM" id="73621394"/>
<dbReference type="jPOST" id="Q96CB8"/>
<dbReference type="MassIVE" id="Q96CB8"/>
<dbReference type="PaxDb" id="9606-ENSP00000415433"/>
<dbReference type="PeptideAtlas" id="Q96CB8"/>
<dbReference type="ProteomicsDB" id="76174"/>
<dbReference type="Pumba" id="Q96CB8"/>
<dbReference type="Antibodypedia" id="26162">
    <property type="antibodies" value="79 antibodies from 21 providers"/>
</dbReference>
<dbReference type="DNASU" id="57117"/>
<dbReference type="Ensembl" id="ENST00000340139.10">
    <property type="protein sequence ID" value="ENSP00000340737.5"/>
    <property type="gene ID" value="ENSG00000138785.16"/>
</dbReference>
<dbReference type="Ensembl" id="ENST00000394735.5">
    <property type="protein sequence ID" value="ENSP00000378221.1"/>
    <property type="gene ID" value="ENSG00000138785.16"/>
</dbReference>
<dbReference type="Ensembl" id="ENST00000451321.6">
    <property type="protein sequence ID" value="ENSP00000415433.2"/>
    <property type="gene ID" value="ENSG00000138785.16"/>
</dbReference>
<dbReference type="GeneID" id="57117"/>
<dbReference type="KEGG" id="hsa:57117"/>
<dbReference type="MANE-Select" id="ENST00000340139.10">
    <property type="protein sequence ID" value="ENSP00000340737.5"/>
    <property type="RefSeq nucleotide sequence ID" value="NM_020395.4"/>
    <property type="RefSeq protein sequence ID" value="NP_065128.2"/>
</dbReference>
<dbReference type="UCSC" id="uc003hxw.4">
    <property type="organism name" value="human"/>
</dbReference>
<dbReference type="AGR" id="HGNC:25067"/>
<dbReference type="CTD" id="57117"/>
<dbReference type="DisGeNET" id="57117"/>
<dbReference type="GeneCards" id="INTS12"/>
<dbReference type="HGNC" id="HGNC:25067">
    <property type="gene designation" value="INTS12"/>
</dbReference>
<dbReference type="HPA" id="ENSG00000138785">
    <property type="expression patterns" value="Low tissue specificity"/>
</dbReference>
<dbReference type="MIM" id="611355">
    <property type="type" value="gene"/>
</dbReference>
<dbReference type="neXtProt" id="NX_Q96CB8"/>
<dbReference type="OpenTargets" id="ENSG00000138785"/>
<dbReference type="PharmGKB" id="PA142671177"/>
<dbReference type="VEuPathDB" id="HostDB:ENSG00000138785"/>
<dbReference type="eggNOG" id="KOG4323">
    <property type="taxonomic scope" value="Eukaryota"/>
</dbReference>
<dbReference type="GeneTree" id="ENSGT00390000005218"/>
<dbReference type="HOGENOM" id="CLU_033336_0_0_1"/>
<dbReference type="InParanoid" id="Q96CB8"/>
<dbReference type="OMA" id="QECHCLY"/>
<dbReference type="OrthoDB" id="5846437at2759"/>
<dbReference type="PAN-GO" id="Q96CB8">
    <property type="GO annotations" value="2 GO annotations based on evolutionary models"/>
</dbReference>
<dbReference type="PhylomeDB" id="Q96CB8"/>
<dbReference type="TreeFam" id="TF106418"/>
<dbReference type="PathwayCommons" id="Q96CB8"/>
<dbReference type="Reactome" id="R-HSA-6807505">
    <property type="pathway name" value="RNA polymerase II transcribes snRNA genes"/>
</dbReference>
<dbReference type="SignaLink" id="Q96CB8"/>
<dbReference type="SIGNOR" id="Q96CB8"/>
<dbReference type="BioGRID-ORCS" id="57117">
    <property type="hits" value="354 hits in 1185 CRISPR screens"/>
</dbReference>
<dbReference type="GeneWiki" id="INTS12"/>
<dbReference type="GenomeRNAi" id="57117"/>
<dbReference type="Pharos" id="Q96CB8">
    <property type="development level" value="Tbio"/>
</dbReference>
<dbReference type="PRO" id="PR:Q96CB8"/>
<dbReference type="Proteomes" id="UP000005640">
    <property type="component" value="Chromosome 4"/>
</dbReference>
<dbReference type="RNAct" id="Q96CB8">
    <property type="molecule type" value="protein"/>
</dbReference>
<dbReference type="Bgee" id="ENSG00000138785">
    <property type="expression patterns" value="Expressed in male germ line stem cell (sensu Vertebrata) in testis and 202 other cell types or tissues"/>
</dbReference>
<dbReference type="ExpressionAtlas" id="Q96CB8">
    <property type="expression patterns" value="baseline and differential"/>
</dbReference>
<dbReference type="GO" id="GO:0160232">
    <property type="term" value="C:INTAC complex"/>
    <property type="evidence" value="ECO:0000314"/>
    <property type="project" value="UniProtKB"/>
</dbReference>
<dbReference type="GO" id="GO:0032039">
    <property type="term" value="C:integrator complex"/>
    <property type="evidence" value="ECO:0000314"/>
    <property type="project" value="UniProtKB"/>
</dbReference>
<dbReference type="GO" id="GO:0005654">
    <property type="term" value="C:nucleoplasm"/>
    <property type="evidence" value="ECO:0000304"/>
    <property type="project" value="Reactome"/>
</dbReference>
<dbReference type="GO" id="GO:0005634">
    <property type="term" value="C:nucleus"/>
    <property type="evidence" value="ECO:0000314"/>
    <property type="project" value="UniProtKB"/>
</dbReference>
<dbReference type="GO" id="GO:0008270">
    <property type="term" value="F:zinc ion binding"/>
    <property type="evidence" value="ECO:0007669"/>
    <property type="project" value="UniProtKB-KW"/>
</dbReference>
<dbReference type="GO" id="GO:0034243">
    <property type="term" value="P:regulation of transcription elongation by RNA polymerase II"/>
    <property type="evidence" value="ECO:0000303"/>
    <property type="project" value="ComplexPortal"/>
</dbReference>
<dbReference type="GO" id="GO:0160240">
    <property type="term" value="P:RNA polymerase II transcription initiation surveillance"/>
    <property type="evidence" value="ECO:0000314"/>
    <property type="project" value="UniProtKB"/>
</dbReference>
<dbReference type="GO" id="GO:0034472">
    <property type="term" value="P:snRNA 3'-end processing"/>
    <property type="evidence" value="ECO:0000318"/>
    <property type="project" value="GO_Central"/>
</dbReference>
<dbReference type="GO" id="GO:0016180">
    <property type="term" value="P:snRNA processing"/>
    <property type="evidence" value="ECO:0000314"/>
    <property type="project" value="HGNC-UCL"/>
</dbReference>
<dbReference type="CDD" id="cd15501">
    <property type="entry name" value="PHD_Int12"/>
    <property type="match status" value="1"/>
</dbReference>
<dbReference type="FunFam" id="3.30.40.10:FF:000101">
    <property type="entry name" value="Integrator complex subunit 12"/>
    <property type="match status" value="1"/>
</dbReference>
<dbReference type="Gene3D" id="3.30.40.10">
    <property type="entry name" value="Zinc/RING finger domain, C3HC4 (zinc finger)"/>
    <property type="match status" value="1"/>
</dbReference>
<dbReference type="InterPro" id="IPR039054">
    <property type="entry name" value="Int12_PHD"/>
</dbReference>
<dbReference type="InterPro" id="IPR051776">
    <property type="entry name" value="Integrator_subunit_12"/>
</dbReference>
<dbReference type="InterPro" id="IPR019786">
    <property type="entry name" value="Zinc_finger_PHD-type_CS"/>
</dbReference>
<dbReference type="InterPro" id="IPR011011">
    <property type="entry name" value="Znf_FYVE_PHD"/>
</dbReference>
<dbReference type="InterPro" id="IPR001965">
    <property type="entry name" value="Znf_PHD"/>
</dbReference>
<dbReference type="InterPro" id="IPR019787">
    <property type="entry name" value="Znf_PHD-finger"/>
</dbReference>
<dbReference type="InterPro" id="IPR013083">
    <property type="entry name" value="Znf_RING/FYVE/PHD"/>
</dbReference>
<dbReference type="PANTHER" id="PTHR13415:SF2">
    <property type="entry name" value="INTEGRATOR COMPLEX SUBUNIT 12"/>
    <property type="match status" value="1"/>
</dbReference>
<dbReference type="PANTHER" id="PTHR13415">
    <property type="entry name" value="NUCLEAR FACTOR-RELATED"/>
    <property type="match status" value="1"/>
</dbReference>
<dbReference type="Pfam" id="PF00628">
    <property type="entry name" value="PHD"/>
    <property type="match status" value="1"/>
</dbReference>
<dbReference type="SMART" id="SM00249">
    <property type="entry name" value="PHD"/>
    <property type="match status" value="1"/>
</dbReference>
<dbReference type="SUPFAM" id="SSF57903">
    <property type="entry name" value="FYVE/PHD zinc finger"/>
    <property type="match status" value="1"/>
</dbReference>
<dbReference type="PROSITE" id="PS01359">
    <property type="entry name" value="ZF_PHD_1"/>
    <property type="match status" value="1"/>
</dbReference>
<dbReference type="PROSITE" id="PS50016">
    <property type="entry name" value="ZF_PHD_2"/>
    <property type="match status" value="1"/>
</dbReference>